<organism>
    <name type="scientific">Streptococcus pyogenes serotype M12 (strain MGAS9429)</name>
    <dbReference type="NCBI Taxonomy" id="370551"/>
    <lineage>
        <taxon>Bacteria</taxon>
        <taxon>Bacillati</taxon>
        <taxon>Bacillota</taxon>
        <taxon>Bacilli</taxon>
        <taxon>Lactobacillales</taxon>
        <taxon>Streptococcaceae</taxon>
        <taxon>Streptococcus</taxon>
    </lineage>
</organism>
<accession>Q1JNV5</accession>
<name>HSLO_STRPC</name>
<evidence type="ECO:0000255" key="1">
    <source>
        <dbReference type="HAMAP-Rule" id="MF_00117"/>
    </source>
</evidence>
<dbReference type="EMBL" id="CP000259">
    <property type="protein sequence ID" value="ABF31294.1"/>
    <property type="molecule type" value="Genomic_DNA"/>
</dbReference>
<dbReference type="RefSeq" id="WP_002987814.1">
    <property type="nucleotide sequence ID" value="NC_008021.1"/>
</dbReference>
<dbReference type="SMR" id="Q1JNV5"/>
<dbReference type="KEGG" id="spk:MGAS9429_Spy0106"/>
<dbReference type="HOGENOM" id="CLU_054493_1_0_9"/>
<dbReference type="Proteomes" id="UP000002433">
    <property type="component" value="Chromosome"/>
</dbReference>
<dbReference type="GO" id="GO:0005737">
    <property type="term" value="C:cytoplasm"/>
    <property type="evidence" value="ECO:0007669"/>
    <property type="project" value="UniProtKB-SubCell"/>
</dbReference>
<dbReference type="GO" id="GO:0044183">
    <property type="term" value="F:protein folding chaperone"/>
    <property type="evidence" value="ECO:0007669"/>
    <property type="project" value="TreeGrafter"/>
</dbReference>
<dbReference type="GO" id="GO:0051082">
    <property type="term" value="F:unfolded protein binding"/>
    <property type="evidence" value="ECO:0007669"/>
    <property type="project" value="UniProtKB-UniRule"/>
</dbReference>
<dbReference type="GO" id="GO:0042026">
    <property type="term" value="P:protein refolding"/>
    <property type="evidence" value="ECO:0007669"/>
    <property type="project" value="TreeGrafter"/>
</dbReference>
<dbReference type="CDD" id="cd00498">
    <property type="entry name" value="Hsp33"/>
    <property type="match status" value="1"/>
</dbReference>
<dbReference type="Gene3D" id="3.55.30.10">
    <property type="entry name" value="Hsp33 domain"/>
    <property type="match status" value="1"/>
</dbReference>
<dbReference type="Gene3D" id="3.90.1280.10">
    <property type="entry name" value="HSP33 redox switch-like"/>
    <property type="match status" value="1"/>
</dbReference>
<dbReference type="HAMAP" id="MF_00117">
    <property type="entry name" value="HslO"/>
    <property type="match status" value="1"/>
</dbReference>
<dbReference type="InterPro" id="IPR000397">
    <property type="entry name" value="Heat_shock_Hsp33"/>
</dbReference>
<dbReference type="InterPro" id="IPR016154">
    <property type="entry name" value="Heat_shock_Hsp33_C"/>
</dbReference>
<dbReference type="InterPro" id="IPR016153">
    <property type="entry name" value="Heat_shock_Hsp33_N"/>
</dbReference>
<dbReference type="NCBIfam" id="NF001033">
    <property type="entry name" value="PRK00114.1"/>
    <property type="match status" value="1"/>
</dbReference>
<dbReference type="PANTHER" id="PTHR30111">
    <property type="entry name" value="33 KDA CHAPERONIN"/>
    <property type="match status" value="1"/>
</dbReference>
<dbReference type="PANTHER" id="PTHR30111:SF1">
    <property type="entry name" value="33 KDA CHAPERONIN"/>
    <property type="match status" value="1"/>
</dbReference>
<dbReference type="Pfam" id="PF01430">
    <property type="entry name" value="HSP33"/>
    <property type="match status" value="1"/>
</dbReference>
<dbReference type="PIRSF" id="PIRSF005261">
    <property type="entry name" value="Heat_shock_Hsp33"/>
    <property type="match status" value="1"/>
</dbReference>
<dbReference type="SUPFAM" id="SSF64397">
    <property type="entry name" value="Hsp33 domain"/>
    <property type="match status" value="1"/>
</dbReference>
<dbReference type="SUPFAM" id="SSF118352">
    <property type="entry name" value="HSP33 redox switch-like"/>
    <property type="match status" value="1"/>
</dbReference>
<protein>
    <recommendedName>
        <fullName evidence="1">33 kDa chaperonin</fullName>
    </recommendedName>
    <alternativeName>
        <fullName evidence="1">Heat shock protein 33 homolog</fullName>
        <shortName evidence="1">HSP33</shortName>
    </alternativeName>
</protein>
<feature type="chain" id="PRO_1000015579" description="33 kDa chaperonin">
    <location>
        <begin position="1"/>
        <end position="290"/>
    </location>
</feature>
<feature type="disulfide bond" description="Redox-active" evidence="1">
    <location>
        <begin position="235"/>
        <end position="237"/>
    </location>
</feature>
<feature type="disulfide bond" description="Redox-active" evidence="1">
    <location>
        <begin position="268"/>
        <end position="271"/>
    </location>
</feature>
<reference key="1">
    <citation type="journal article" date="2006" name="Proc. Natl. Acad. Sci. U.S.A.">
        <title>Molecular genetic anatomy of inter- and intraserotype variation in the human bacterial pathogen group A Streptococcus.</title>
        <authorList>
            <person name="Beres S.B."/>
            <person name="Richter E.W."/>
            <person name="Nagiec M.J."/>
            <person name="Sumby P."/>
            <person name="Porcella S.F."/>
            <person name="DeLeo F.R."/>
            <person name="Musser J.M."/>
        </authorList>
    </citation>
    <scope>NUCLEOTIDE SEQUENCE [LARGE SCALE GENOMIC DNA]</scope>
    <source>
        <strain>MGAS9429</strain>
    </source>
</reference>
<gene>
    <name evidence="1" type="primary">hslO</name>
    <name type="ordered locus">MGAS9429_Spy0106</name>
</gene>
<proteinExistence type="inferred from homology"/>
<keyword id="KW-0143">Chaperone</keyword>
<keyword id="KW-0963">Cytoplasm</keyword>
<keyword id="KW-1015">Disulfide bond</keyword>
<keyword id="KW-0676">Redox-active center</keyword>
<keyword id="KW-0862">Zinc</keyword>
<sequence>MDKIIKSIAQSGSFRAYVLDSTETVALAQEKHNTLSSSTVALGRTLIANQILAANQKGDSRITVKVIGDSSFGHIISVADTKGHVKGYIQNTGVDIKKTATGEVLVGPFMGNGHFVTIIDYGTGNPYTSTTPLITGEIGEDFAYYLTESEQTPSAIGLNVLLDENDKVKVAGGFMVQVLPGASEEEVARYEKRLQEMPAISHLLASKNHVDALLEAIYGDEPYKRLSEEPLSFQCDCSRERFEAALMTLPKADLQAMIDEDKGAEIVCQFCGTKYQFNESDLEAIINDKA</sequence>
<comment type="function">
    <text evidence="1">Redox regulated molecular chaperone. Protects both thermally unfolding and oxidatively damaged proteins from irreversible aggregation. Plays an important role in the bacterial defense system toward oxidative stress.</text>
</comment>
<comment type="subcellular location">
    <subcellularLocation>
        <location evidence="1">Cytoplasm</location>
    </subcellularLocation>
</comment>
<comment type="PTM">
    <text evidence="1">Under oxidizing conditions two disulfide bonds are formed involving the reactive cysteines. Under reducing conditions zinc is bound to the reactive cysteines and the protein is inactive.</text>
</comment>
<comment type="similarity">
    <text evidence="1">Belongs to the HSP33 family.</text>
</comment>